<reference key="1">
    <citation type="journal article" date="2008" name="Chem. Biol. Interact.">
        <title>Extending the Bacillus cereus group genomics to putative food-borne pathogens of different toxicity.</title>
        <authorList>
            <person name="Lapidus A."/>
            <person name="Goltsman E."/>
            <person name="Auger S."/>
            <person name="Galleron N."/>
            <person name="Segurens B."/>
            <person name="Dossat C."/>
            <person name="Land M.L."/>
            <person name="Broussolle V."/>
            <person name="Brillard J."/>
            <person name="Guinebretiere M.-H."/>
            <person name="Sanchis V."/>
            <person name="Nguen-the C."/>
            <person name="Lereclus D."/>
            <person name="Richardson P."/>
            <person name="Wincker P."/>
            <person name="Weissenbach J."/>
            <person name="Ehrlich S.D."/>
            <person name="Sorokin A."/>
        </authorList>
    </citation>
    <scope>NUCLEOTIDE SEQUENCE [LARGE SCALE GENOMIC DNA]</scope>
    <source>
        <strain>DSM 22905 / CIP 110041 / 391-98 / NVH 391-98</strain>
    </source>
</reference>
<keyword id="KW-0963">Cytoplasm</keyword>
<keyword id="KW-0227">DNA damage</keyword>
<keyword id="KW-0233">DNA recombination</keyword>
<keyword id="KW-0234">DNA repair</keyword>
<keyword id="KW-0255">Endonuclease</keyword>
<keyword id="KW-0378">Hydrolase</keyword>
<keyword id="KW-0460">Magnesium</keyword>
<keyword id="KW-0479">Metal-binding</keyword>
<keyword id="KW-0540">Nuclease</keyword>
<gene>
    <name evidence="1" type="primary">recU</name>
    <name type="ordered locus">Bcer98_1273</name>
</gene>
<protein>
    <recommendedName>
        <fullName evidence="1">Holliday junction resolvase RecU</fullName>
        <ecNumber evidence="1">3.1.21.10</ecNumber>
    </recommendedName>
    <alternativeName>
        <fullName evidence="1">Recombination protein U homolog</fullName>
    </alternativeName>
</protein>
<organism>
    <name type="scientific">Bacillus cytotoxicus (strain DSM 22905 / CIP 110041 / 391-98 / NVH 391-98)</name>
    <dbReference type="NCBI Taxonomy" id="315749"/>
    <lineage>
        <taxon>Bacteria</taxon>
        <taxon>Bacillati</taxon>
        <taxon>Bacillota</taxon>
        <taxon>Bacilli</taxon>
        <taxon>Bacillales</taxon>
        <taxon>Bacillaceae</taxon>
        <taxon>Bacillus</taxon>
        <taxon>Bacillus cereus group</taxon>
    </lineage>
</organism>
<name>RECU_BACCN</name>
<evidence type="ECO:0000255" key="1">
    <source>
        <dbReference type="HAMAP-Rule" id="MF_00130"/>
    </source>
</evidence>
<comment type="function">
    <text evidence="1">Endonuclease that resolves Holliday junction intermediates in genetic recombination. Cleaves mobile four-strand junctions by introducing symmetrical nicks in paired strands. Promotes annealing of linear ssDNA with homologous dsDNA. Required for DNA repair, homologous recombination and chromosome segregation.</text>
</comment>
<comment type="catalytic activity">
    <reaction evidence="1">
        <text>Endonucleolytic cleavage at a junction such as a reciprocal single-stranded crossover between two homologous DNA duplexes (Holliday junction).</text>
        <dbReference type="EC" id="3.1.21.10"/>
    </reaction>
</comment>
<comment type="cofactor">
    <cofactor evidence="1">
        <name>Mg(2+)</name>
        <dbReference type="ChEBI" id="CHEBI:18420"/>
    </cofactor>
    <text evidence="1">Binds 1 Mg(2+) ion per subunit.</text>
</comment>
<comment type="subcellular location">
    <subcellularLocation>
        <location evidence="1">Cytoplasm</location>
    </subcellularLocation>
</comment>
<comment type="similarity">
    <text evidence="1">Belongs to the RecU family.</text>
</comment>
<proteinExistence type="inferred from homology"/>
<sequence length="200" mass="23412">MTIRYPNGKRYNQALQPQKTKMKKHTYGNRGMSLEEELNETNQYYLSHNIACVHKKPTPLQIVKVDYPARSAAVVREAYFKQPSTTDYNGVYKGKYIDFEAKETKNKTNFPLQNFHLHQIEHMKQVIAHDGIAFVIIKFTLYNEIYLLDAKHVISFWNRKDTGGRKSITKQEIEEHGSLLSCGYHPRIDYISILDMVYFS</sequence>
<dbReference type="EC" id="3.1.21.10" evidence="1"/>
<dbReference type="EMBL" id="CP000764">
    <property type="protein sequence ID" value="ABS21595.1"/>
    <property type="molecule type" value="Genomic_DNA"/>
</dbReference>
<dbReference type="RefSeq" id="WP_012093762.1">
    <property type="nucleotide sequence ID" value="NC_009674.1"/>
</dbReference>
<dbReference type="SMR" id="A7GN87"/>
<dbReference type="STRING" id="315749.Bcer98_1273"/>
<dbReference type="GeneID" id="33896621"/>
<dbReference type="KEGG" id="bcy:Bcer98_1273"/>
<dbReference type="eggNOG" id="COG3331">
    <property type="taxonomic scope" value="Bacteria"/>
</dbReference>
<dbReference type="HOGENOM" id="CLU_096340_0_0_9"/>
<dbReference type="OrthoDB" id="9783592at2"/>
<dbReference type="Proteomes" id="UP000002300">
    <property type="component" value="Chromosome"/>
</dbReference>
<dbReference type="GO" id="GO:0005737">
    <property type="term" value="C:cytoplasm"/>
    <property type="evidence" value="ECO:0007669"/>
    <property type="project" value="UniProtKB-SubCell"/>
</dbReference>
<dbReference type="GO" id="GO:0004519">
    <property type="term" value="F:endonuclease activity"/>
    <property type="evidence" value="ECO:0007669"/>
    <property type="project" value="UniProtKB-UniRule"/>
</dbReference>
<dbReference type="GO" id="GO:0000287">
    <property type="term" value="F:magnesium ion binding"/>
    <property type="evidence" value="ECO:0007669"/>
    <property type="project" value="UniProtKB-UniRule"/>
</dbReference>
<dbReference type="GO" id="GO:0003676">
    <property type="term" value="F:nucleic acid binding"/>
    <property type="evidence" value="ECO:0007669"/>
    <property type="project" value="InterPro"/>
</dbReference>
<dbReference type="GO" id="GO:0007059">
    <property type="term" value="P:chromosome segregation"/>
    <property type="evidence" value="ECO:0007669"/>
    <property type="project" value="UniProtKB-UniRule"/>
</dbReference>
<dbReference type="GO" id="GO:0006310">
    <property type="term" value="P:DNA recombination"/>
    <property type="evidence" value="ECO:0007669"/>
    <property type="project" value="UniProtKB-UniRule"/>
</dbReference>
<dbReference type="GO" id="GO:0006281">
    <property type="term" value="P:DNA repair"/>
    <property type="evidence" value="ECO:0007669"/>
    <property type="project" value="UniProtKB-UniRule"/>
</dbReference>
<dbReference type="CDD" id="cd22354">
    <property type="entry name" value="RecU-like"/>
    <property type="match status" value="1"/>
</dbReference>
<dbReference type="Gene3D" id="3.40.1350.10">
    <property type="match status" value="1"/>
</dbReference>
<dbReference type="HAMAP" id="MF_00130">
    <property type="entry name" value="RecU"/>
    <property type="match status" value="1"/>
</dbReference>
<dbReference type="InterPro" id="IPR004612">
    <property type="entry name" value="Resolv_RecU"/>
</dbReference>
<dbReference type="InterPro" id="IPR011335">
    <property type="entry name" value="Restrct_endonuc-II-like"/>
</dbReference>
<dbReference type="InterPro" id="IPR011856">
    <property type="entry name" value="tRNA_endonuc-like_dom_sf"/>
</dbReference>
<dbReference type="NCBIfam" id="NF002581">
    <property type="entry name" value="PRK02234.1-2"/>
    <property type="match status" value="1"/>
</dbReference>
<dbReference type="NCBIfam" id="NF002584">
    <property type="entry name" value="PRK02234.1-5"/>
    <property type="match status" value="1"/>
</dbReference>
<dbReference type="NCBIfam" id="NF002585">
    <property type="entry name" value="PRK02234.1-6"/>
    <property type="match status" value="1"/>
</dbReference>
<dbReference type="NCBIfam" id="TIGR00648">
    <property type="entry name" value="recU"/>
    <property type="match status" value="1"/>
</dbReference>
<dbReference type="Pfam" id="PF03838">
    <property type="entry name" value="RecU"/>
    <property type="match status" value="1"/>
</dbReference>
<dbReference type="PIRSF" id="PIRSF037785">
    <property type="entry name" value="RecU"/>
    <property type="match status" value="1"/>
</dbReference>
<dbReference type="SUPFAM" id="SSF52980">
    <property type="entry name" value="Restriction endonuclease-like"/>
    <property type="match status" value="1"/>
</dbReference>
<accession>A7GN87</accession>
<feature type="chain" id="PRO_1000076339" description="Holliday junction resolvase RecU">
    <location>
        <begin position="1"/>
        <end position="200"/>
    </location>
</feature>
<feature type="binding site" evidence="1">
    <location>
        <position position="85"/>
    </location>
    <ligand>
        <name>Mg(2+)</name>
        <dbReference type="ChEBI" id="CHEBI:18420"/>
    </ligand>
</feature>
<feature type="binding site" evidence="1">
    <location>
        <position position="87"/>
    </location>
    <ligand>
        <name>Mg(2+)</name>
        <dbReference type="ChEBI" id="CHEBI:18420"/>
    </ligand>
</feature>
<feature type="binding site" evidence="1">
    <location>
        <position position="100"/>
    </location>
    <ligand>
        <name>Mg(2+)</name>
        <dbReference type="ChEBI" id="CHEBI:18420"/>
    </ligand>
</feature>
<feature type="binding site" evidence="1">
    <location>
        <position position="119"/>
    </location>
    <ligand>
        <name>Mg(2+)</name>
        <dbReference type="ChEBI" id="CHEBI:18420"/>
    </ligand>
</feature>
<feature type="site" description="Transition state stabilizer" evidence="1">
    <location>
        <position position="102"/>
    </location>
</feature>